<reference evidence="5 6" key="1">
    <citation type="journal article" date="2004" name="Insect Biochem. Mol. Biol.">
        <title>Towards a comprehensive view of the primary structure of venom proteins from the parasitoid wasp Pimpla hypochondriaca.</title>
        <authorList>
            <person name="Parkinson N.M."/>
            <person name="Conyers C."/>
            <person name="Keen J."/>
            <person name="MacNicoll A."/>
            <person name="Smith I."/>
            <person name="Audsley N."/>
            <person name="Weaver R."/>
        </authorList>
    </citation>
    <scope>NUCLEOTIDE SEQUENCE [MRNA]</scope>
    <scope>PROTEIN SEQUENCE OF 24-29</scope>
    <source>
        <tissue evidence="4">Venom</tissue>
        <tissue evidence="4">Venom gland</tissue>
    </source>
</reference>
<name>VKT2_PIMHY</name>
<protein>
    <recommendedName>
        <fullName>Kunitz-type serine protease inhibitor cvp2</fullName>
    </recommendedName>
    <alternativeName>
        <fullName>Cysteine-rich venom protein 2</fullName>
        <shortName>cvp2</shortName>
    </alternativeName>
</protein>
<organism>
    <name type="scientific">Pimpla hypochondriaca</name>
    <name type="common">Parasitoid wasp</name>
    <dbReference type="NCBI Taxonomy" id="135724"/>
    <lineage>
        <taxon>Eukaryota</taxon>
        <taxon>Metazoa</taxon>
        <taxon>Ecdysozoa</taxon>
        <taxon>Arthropoda</taxon>
        <taxon>Hexapoda</taxon>
        <taxon>Insecta</taxon>
        <taxon>Pterygota</taxon>
        <taxon>Neoptera</taxon>
        <taxon>Endopterygota</taxon>
        <taxon>Hymenoptera</taxon>
        <taxon>Apocrita</taxon>
        <taxon>Ichneumonoidea</taxon>
        <taxon>Ichneumonidae</taxon>
        <taxon>Pimplinae</taxon>
        <taxon>Pimplini</taxon>
        <taxon>Pimpla</taxon>
    </lineage>
</organism>
<dbReference type="EMBL" id="AJ438993">
    <property type="protein sequence ID" value="CAD27738.1"/>
    <property type="molecule type" value="mRNA"/>
</dbReference>
<dbReference type="SMR" id="Q8T0W4"/>
<dbReference type="GO" id="GO:0005615">
    <property type="term" value="C:extracellular space"/>
    <property type="evidence" value="ECO:0007669"/>
    <property type="project" value="TreeGrafter"/>
</dbReference>
<dbReference type="GO" id="GO:0004867">
    <property type="term" value="F:serine-type endopeptidase inhibitor activity"/>
    <property type="evidence" value="ECO:0007669"/>
    <property type="project" value="UniProtKB-KW"/>
</dbReference>
<dbReference type="CDD" id="cd00109">
    <property type="entry name" value="Kunitz-type"/>
    <property type="match status" value="1"/>
</dbReference>
<dbReference type="Gene3D" id="4.10.410.10">
    <property type="entry name" value="Pancreatic trypsin inhibitor Kunitz domain"/>
    <property type="match status" value="1"/>
</dbReference>
<dbReference type="InterPro" id="IPR002223">
    <property type="entry name" value="Kunitz_BPTI"/>
</dbReference>
<dbReference type="InterPro" id="IPR036880">
    <property type="entry name" value="Kunitz_BPTI_sf"/>
</dbReference>
<dbReference type="InterPro" id="IPR020901">
    <property type="entry name" value="Prtase_inh_Kunz-CS"/>
</dbReference>
<dbReference type="InterPro" id="IPR050098">
    <property type="entry name" value="TFPI/VKTCI-like"/>
</dbReference>
<dbReference type="PANTHER" id="PTHR10083:SF374">
    <property type="entry name" value="BPTI_KUNITZ INHIBITOR DOMAIN-CONTAINING PROTEIN"/>
    <property type="match status" value="1"/>
</dbReference>
<dbReference type="PANTHER" id="PTHR10083">
    <property type="entry name" value="KUNITZ-TYPE PROTEASE INHIBITOR-RELATED"/>
    <property type="match status" value="1"/>
</dbReference>
<dbReference type="Pfam" id="PF00014">
    <property type="entry name" value="Kunitz_BPTI"/>
    <property type="match status" value="1"/>
</dbReference>
<dbReference type="PRINTS" id="PR00759">
    <property type="entry name" value="BASICPTASE"/>
</dbReference>
<dbReference type="SMART" id="SM00131">
    <property type="entry name" value="KU"/>
    <property type="match status" value="1"/>
</dbReference>
<dbReference type="SUPFAM" id="SSF57362">
    <property type="entry name" value="BPTI-like"/>
    <property type="match status" value="1"/>
</dbReference>
<dbReference type="PROSITE" id="PS00280">
    <property type="entry name" value="BPTI_KUNITZ_1"/>
    <property type="match status" value="1"/>
</dbReference>
<dbReference type="PROSITE" id="PS50279">
    <property type="entry name" value="BPTI_KUNITZ_2"/>
    <property type="match status" value="1"/>
</dbReference>
<comment type="function">
    <text evidence="1">Serine protease inhibitor.</text>
</comment>
<comment type="subcellular location">
    <subcellularLocation>
        <location evidence="4">Secreted</location>
    </subcellularLocation>
</comment>
<comment type="tissue specificity">
    <text evidence="4">Expressed by the venom gland.</text>
</comment>
<comment type="similarity">
    <text evidence="5">Belongs to the venom Kunitz-type family.</text>
</comment>
<accession>Q8T0W4</accession>
<keyword id="KW-0903">Direct protein sequencing</keyword>
<keyword id="KW-1015">Disulfide bond</keyword>
<keyword id="KW-0646">Protease inhibitor</keyword>
<keyword id="KW-0964">Secreted</keyword>
<keyword id="KW-0722">Serine protease inhibitor</keyword>
<keyword id="KW-0732">Signal</keyword>
<proteinExistence type="evidence at protein level"/>
<sequence length="77" mass="7873">MNAKIVALLIVVGFVGMFNVATAADPLCSLEPAVGLCKASIPRFASVGGKCQEFIYGGCGGNANNFQTQAECEAKCG</sequence>
<feature type="signal peptide" evidence="2 4">
    <location>
        <begin position="1"/>
        <end position="23"/>
    </location>
</feature>
<feature type="chain" id="PRO_0000016860" description="Kunitz-type serine protease inhibitor cvp2">
    <location>
        <begin position="24"/>
        <end position="77"/>
    </location>
</feature>
<feature type="domain" description="BPTI/Kunitz inhibitor" evidence="3">
    <location>
        <begin position="28"/>
        <end position="76"/>
    </location>
</feature>
<feature type="site" description="Reactive bond for trypsin" evidence="1">
    <location>
        <begin position="35"/>
        <end position="36"/>
    </location>
</feature>
<feature type="disulfide bond" evidence="3">
    <location>
        <begin position="28"/>
        <end position="76"/>
    </location>
</feature>
<feature type="disulfide bond" evidence="3">
    <location>
        <begin position="37"/>
        <end position="59"/>
    </location>
</feature>
<feature type="disulfide bond" evidence="3">
    <location>
        <begin position="51"/>
        <end position="72"/>
    </location>
</feature>
<evidence type="ECO:0000250" key="1"/>
<evidence type="ECO:0000255" key="2"/>
<evidence type="ECO:0000255" key="3">
    <source>
        <dbReference type="PROSITE-ProRule" id="PRU00031"/>
    </source>
</evidence>
<evidence type="ECO:0000269" key="4">
    <source>
    </source>
</evidence>
<evidence type="ECO:0000305" key="5"/>
<evidence type="ECO:0000312" key="6">
    <source>
        <dbReference type="EMBL" id="CAD27738.1"/>
    </source>
</evidence>